<accession>Q8IJA9</accession>
<feature type="chain" id="PRO_0000451864" description="Adenosine deaminase">
    <location>
        <begin position="1"/>
        <end position="367"/>
    </location>
</feature>
<feature type="region of interest" description="Gating helix loop; regulates binding affinity for substrates and thus substrate selectivity" evidence="3">
    <location>
        <begin position="174"/>
        <end position="188"/>
    </location>
</feature>
<feature type="binding site" evidence="3 9">
    <location>
        <position position="46"/>
    </location>
    <ligand>
        <name>Zn(2+)</name>
        <dbReference type="ChEBI" id="CHEBI:29105"/>
        <note>catalytic</note>
    </ligand>
</feature>
<feature type="binding site" evidence="1">
    <location>
        <begin position="48"/>
        <end position="50"/>
    </location>
    <ligand>
        <name>a purine D-ribonucleoside</name>
        <dbReference type="ChEBI" id="CHEBI:142355"/>
    </ligand>
</feature>
<feature type="binding site" evidence="3 9">
    <location>
        <position position="48"/>
    </location>
    <ligand>
        <name>Zn(2+)</name>
        <dbReference type="ChEBI" id="CHEBI:29105"/>
        <note>catalytic</note>
    </ligand>
</feature>
<feature type="binding site" evidence="1">
    <location>
        <position position="176"/>
    </location>
    <ligand>
        <name>a purine D-ribonucleoside</name>
        <dbReference type="ChEBI" id="CHEBI:142355"/>
    </ligand>
</feature>
<feature type="binding site" evidence="6 9">
    <location>
        <position position="205"/>
    </location>
    <ligand>
        <name>a purine D-ribonucleoside</name>
        <dbReference type="ChEBI" id="CHEBI:142355"/>
    </ligand>
</feature>
<feature type="binding site" evidence="3 9">
    <location>
        <position position="230"/>
    </location>
    <ligand>
        <name>Zn(2+)</name>
        <dbReference type="ChEBI" id="CHEBI:29105"/>
        <note>catalytic</note>
    </ligand>
</feature>
<feature type="binding site" evidence="1">
    <location>
        <position position="233"/>
    </location>
    <ligand>
        <name>a purine D-ribonucleoside</name>
        <dbReference type="ChEBI" id="CHEBI:142355"/>
    </ligand>
</feature>
<feature type="binding site" evidence="1">
    <location>
        <position position="257"/>
    </location>
    <ligand>
        <name>a purine D-ribonucleoside</name>
        <dbReference type="ChEBI" id="CHEBI:142355"/>
    </ligand>
</feature>
<feature type="binding site" evidence="1">
    <location>
        <position position="314"/>
    </location>
    <ligand>
        <name>a purine D-ribonucleoside</name>
        <dbReference type="ChEBI" id="CHEBI:142355"/>
    </ligand>
</feature>
<feature type="binding site" evidence="3 9">
    <location>
        <position position="314"/>
    </location>
    <ligand>
        <name>Zn(2+)</name>
        <dbReference type="ChEBI" id="CHEBI:29105"/>
        <note>catalytic</note>
    </ligand>
</feature>
<feature type="site" description="Important for substrate specificity for S-methyl-5'-thioadenosine" evidence="1">
    <location>
        <position position="176"/>
    </location>
</feature>
<feature type="mutagenesis site" description="No effect on catalytic activity towards adenosine or 5'-methylthioadenosine; when associated with I-227." evidence="3">
    <original>C</original>
    <variation>Q</variation>
    <location>
        <position position="27"/>
    </location>
</feature>
<feature type="mutagenesis site" description="Severe decrease in catalytic activity towards adenosine or 5'-methylthioadenosine." evidence="3">
    <original>F</original>
    <variation>L</variation>
    <location>
        <position position="136"/>
    </location>
</feature>
<feature type="mutagenesis site" description="Slight decrease in affinity for adenosine and severe reduction in affinity for 5'-methylthioadenosine." evidence="3">
    <original>T</original>
    <variation>A</variation>
    <location>
        <position position="174"/>
    </location>
</feature>
<feature type="mutagenesis site" description="Slight increase in affinity for adenosine and severe reduction in affinity for 5'-methylthioadenosine." evidence="3">
    <original>T</original>
    <variation>I</variation>
    <location>
        <position position="174"/>
    </location>
</feature>
<feature type="mutagenesis site" description="7-fold reduction in affinity for adenosine and 9-fold reduction in affinity for 5'-methylthioadenosine. Reduces further catalytic efficiency with adenosine or 5'-methylthioadenosine as substrates; when associated H-179." evidence="3">
    <original>D</original>
    <variation>A</variation>
    <location>
        <position position="176"/>
    </location>
</feature>
<feature type="mutagenesis site" description="Severe reduction in catalytic efficiency with adenosine or 5'-methylthioadenosine as substrates." evidence="3">
    <original>D</original>
    <variation>M</variation>
    <location>
        <position position="176"/>
    </location>
</feature>
<feature type="mutagenesis site" description="No effect on catalytic activity. Reduces further catalytic efficiency with adenosine or 5'-methylthioadenosine as substrates; when associated A-176." evidence="3">
    <original>L</original>
    <variation>H</variation>
    <location>
        <position position="179"/>
    </location>
</feature>
<feature type="mutagenesis site" description="No effect on catalytic activity towards adenosine or 5'-methylthioadenosine; when associated with Q-27." evidence="3">
    <original>L</original>
    <variation>I</variation>
    <location>
        <position position="227"/>
    </location>
</feature>
<feature type="helix" evidence="10">
    <location>
        <begin position="30"/>
        <end position="39"/>
    </location>
</feature>
<feature type="strand" evidence="10">
    <location>
        <begin position="42"/>
        <end position="44"/>
    </location>
</feature>
<feature type="helix" evidence="10">
    <location>
        <begin position="49"/>
        <end position="51"/>
    </location>
</feature>
<feature type="helix" evidence="10">
    <location>
        <begin position="55"/>
        <end position="64"/>
    </location>
</feature>
<feature type="helix" evidence="10">
    <location>
        <begin position="73"/>
        <end position="80"/>
    </location>
</feature>
<feature type="helix" evidence="10">
    <location>
        <begin position="89"/>
        <end position="96"/>
    </location>
</feature>
<feature type="helix" evidence="10">
    <location>
        <begin position="99"/>
        <end position="102"/>
    </location>
</feature>
<feature type="helix" evidence="10">
    <location>
        <begin position="106"/>
        <end position="122"/>
    </location>
</feature>
<feature type="strand" evidence="10">
    <location>
        <begin position="125"/>
        <end position="132"/>
    </location>
</feature>
<feature type="helix" evidence="10">
    <location>
        <begin position="134"/>
        <end position="138"/>
    </location>
</feature>
<feature type="turn" evidence="10">
    <location>
        <begin position="139"/>
        <end position="142"/>
    </location>
</feature>
<feature type="helix" evidence="10">
    <location>
        <begin position="145"/>
        <end position="162"/>
    </location>
</feature>
<feature type="turn" evidence="10">
    <location>
        <begin position="163"/>
        <end position="165"/>
    </location>
</feature>
<feature type="strand" evidence="10">
    <location>
        <begin position="166"/>
        <end position="174"/>
    </location>
</feature>
<feature type="helix" evidence="10">
    <location>
        <begin position="181"/>
        <end position="193"/>
    </location>
</feature>
<feature type="turn" evidence="10">
    <location>
        <begin position="194"/>
        <end position="197"/>
    </location>
</feature>
<feature type="strand" evidence="10">
    <location>
        <begin position="198"/>
        <end position="202"/>
    </location>
</feature>
<feature type="helix" evidence="10">
    <location>
        <begin position="211"/>
        <end position="213"/>
    </location>
</feature>
<feature type="helix" evidence="10">
    <location>
        <begin position="214"/>
        <end position="222"/>
    </location>
</feature>
<feature type="strand" evidence="10">
    <location>
        <begin position="226"/>
        <end position="232"/>
    </location>
</feature>
<feature type="strand" evidence="10">
    <location>
        <begin position="237"/>
        <end position="239"/>
    </location>
</feature>
<feature type="helix" evidence="10">
    <location>
        <begin position="241"/>
        <end position="248"/>
    </location>
</feature>
<feature type="strand" evidence="10">
    <location>
        <begin position="253"/>
        <end position="257"/>
    </location>
</feature>
<feature type="helix" evidence="10">
    <location>
        <begin position="259"/>
        <end position="263"/>
    </location>
</feature>
<feature type="helix" evidence="10">
    <location>
        <begin position="265"/>
        <end position="273"/>
    </location>
</feature>
<feature type="strand" evidence="10">
    <location>
        <begin position="277"/>
        <end position="280"/>
    </location>
</feature>
<feature type="helix" evidence="10">
    <location>
        <begin position="282"/>
        <end position="287"/>
    </location>
</feature>
<feature type="strand" evidence="10">
    <location>
        <begin position="290"/>
        <end position="292"/>
    </location>
</feature>
<feature type="helix" evidence="10">
    <location>
        <begin position="294"/>
        <end position="296"/>
    </location>
</feature>
<feature type="helix" evidence="10">
    <location>
        <begin position="299"/>
        <end position="304"/>
    </location>
</feature>
<feature type="strand" evidence="10">
    <location>
        <begin position="308"/>
        <end position="311"/>
    </location>
</feature>
<feature type="helix" evidence="10">
    <location>
        <begin position="316"/>
        <end position="319"/>
    </location>
</feature>
<feature type="helix" evidence="10">
    <location>
        <begin position="323"/>
        <end position="334"/>
    </location>
</feature>
<feature type="helix" evidence="10">
    <location>
        <begin position="338"/>
        <end position="350"/>
    </location>
</feature>
<feature type="helix" evidence="10">
    <location>
        <begin position="356"/>
        <end position="366"/>
    </location>
</feature>
<proteinExistence type="evidence at protein level"/>
<name>ADA_PLAF7</name>
<gene>
    <name evidence="4" type="primary">ADA</name>
    <name evidence="7" type="ORF">PF3D7_1029600</name>
</gene>
<sequence length="367" mass="42466">MNCKNMDTSYEIINYLTKDELDIDLSCMDKKERYKIWKRLPKCELHCHLDVCFSVDFFLNVIRKYNIQPNMSDEEIIDYYLFSKPGKSLDEFVEKALRLTDIYIDYTVVEDLAKHAVFNKYKEGVVLMEFRYSPSFMSFKHNLDKDLIHEAIVKGLNEAVALLEYKIQVGLLCTGDGGLSHERMKEAAEFCIKHKKDFVGYDHAGHEVDLKPFKDIFDNIREEGISLSVHAGEDVSIPNLNSLYTAINLLHVKRIGHGIRVSESQELIDLVKEKDILLEVCPISNVLLNNVKSMDTHPIRMLYDAGVKVSVNSDDPGMFLTNITDNYEELYTHLNFTLADFMKMNLWAVQKSFVDPDIKNKIISKYF</sequence>
<organism evidence="8">
    <name type="scientific">Plasmodium falciparum (isolate 3D7)</name>
    <dbReference type="NCBI Taxonomy" id="36329"/>
    <lineage>
        <taxon>Eukaryota</taxon>
        <taxon>Sar</taxon>
        <taxon>Alveolata</taxon>
        <taxon>Apicomplexa</taxon>
        <taxon>Aconoidasida</taxon>
        <taxon>Haemosporida</taxon>
        <taxon>Plasmodiidae</taxon>
        <taxon>Plasmodium</taxon>
        <taxon>Plasmodium (Laverania)</taxon>
    </lineage>
</organism>
<dbReference type="EC" id="3.5.4.4" evidence="2 3"/>
<dbReference type="EC" id="3.5.4.31" evidence="2 3"/>
<dbReference type="EMBL" id="LN999944">
    <property type="protein sequence ID" value="CZT98552.1"/>
    <property type="molecule type" value="Genomic_DNA"/>
</dbReference>
<dbReference type="RefSeq" id="XP_001347573.1">
    <property type="nucleotide sequence ID" value="XM_001347537.1"/>
</dbReference>
<dbReference type="PDB" id="6II7">
    <property type="method" value="X-ray"/>
    <property type="resolution" value="2.48 A"/>
    <property type="chains" value="A=1-367"/>
</dbReference>
<dbReference type="PDBsum" id="6II7"/>
<dbReference type="SMR" id="Q8IJA9"/>
<dbReference type="FunCoup" id="Q8IJA9">
    <property type="interactions" value="47"/>
</dbReference>
<dbReference type="IntAct" id="Q8IJA9">
    <property type="interactions" value="1"/>
</dbReference>
<dbReference type="STRING" id="36329.Q8IJA9"/>
<dbReference type="DrugBank" id="DB11638">
    <property type="generic name" value="Artenimol"/>
</dbReference>
<dbReference type="SwissPalm" id="Q8IJA9"/>
<dbReference type="PaxDb" id="5833-PF10_0289"/>
<dbReference type="EnsemblProtists" id="CZT98552">
    <property type="protein sequence ID" value="CZT98552"/>
    <property type="gene ID" value="PF3D7_1029600"/>
</dbReference>
<dbReference type="GeneID" id="810446"/>
<dbReference type="KEGG" id="pfa:PF3D7_1029600"/>
<dbReference type="VEuPathDB" id="PlasmoDB:PF3D7_1029600"/>
<dbReference type="HOGENOM" id="CLU_039228_0_2_1"/>
<dbReference type="InParanoid" id="Q8IJA9"/>
<dbReference type="OMA" id="NHFTIHA"/>
<dbReference type="OrthoDB" id="272271at2759"/>
<dbReference type="PhylomeDB" id="Q8IJA9"/>
<dbReference type="BRENDA" id="3.5.4.4">
    <property type="organism ID" value="4889"/>
</dbReference>
<dbReference type="Reactome" id="R-PFA-74217">
    <property type="pathway name" value="Purine salvage"/>
</dbReference>
<dbReference type="Reactome" id="R-PFA-9755088">
    <property type="pathway name" value="Ribavirin ADME"/>
</dbReference>
<dbReference type="SABIO-RK" id="Q8IJA9"/>
<dbReference type="UniPathway" id="UPA00606"/>
<dbReference type="Proteomes" id="UP000001450">
    <property type="component" value="Chromosome 10"/>
</dbReference>
<dbReference type="GO" id="GO:0005829">
    <property type="term" value="C:cytosol"/>
    <property type="evidence" value="ECO:0000318"/>
    <property type="project" value="GO_Central"/>
</dbReference>
<dbReference type="GO" id="GO:0009897">
    <property type="term" value="C:external side of plasma membrane"/>
    <property type="evidence" value="ECO:0000318"/>
    <property type="project" value="GO_Central"/>
</dbReference>
<dbReference type="GO" id="GO:0090614">
    <property type="term" value="F:5'-methylthioadenosine deaminase activity"/>
    <property type="evidence" value="ECO:0000314"/>
    <property type="project" value="UniProtKB"/>
</dbReference>
<dbReference type="GO" id="GO:0004000">
    <property type="term" value="F:adenosine deaminase activity"/>
    <property type="evidence" value="ECO:0000314"/>
    <property type="project" value="UniProtKB"/>
</dbReference>
<dbReference type="GO" id="GO:0046872">
    <property type="term" value="F:metal ion binding"/>
    <property type="evidence" value="ECO:0007669"/>
    <property type="project" value="UniProtKB-KW"/>
</dbReference>
<dbReference type="GO" id="GO:0006154">
    <property type="term" value="P:adenosine catabolic process"/>
    <property type="evidence" value="ECO:0000318"/>
    <property type="project" value="GO_Central"/>
</dbReference>
<dbReference type="GO" id="GO:0043103">
    <property type="term" value="P:hypoxanthine salvage"/>
    <property type="evidence" value="ECO:0000318"/>
    <property type="project" value="GO_Central"/>
</dbReference>
<dbReference type="GO" id="GO:0046103">
    <property type="term" value="P:inosine biosynthetic process"/>
    <property type="evidence" value="ECO:0000318"/>
    <property type="project" value="GO_Central"/>
</dbReference>
<dbReference type="GO" id="GO:0060169">
    <property type="term" value="P:negative regulation of adenosine receptor signaling pathway"/>
    <property type="evidence" value="ECO:0000318"/>
    <property type="project" value="GO_Central"/>
</dbReference>
<dbReference type="GO" id="GO:0009168">
    <property type="term" value="P:purine ribonucleoside monophosphate biosynthetic process"/>
    <property type="evidence" value="ECO:0007669"/>
    <property type="project" value="InterPro"/>
</dbReference>
<dbReference type="GO" id="GO:0006166">
    <property type="term" value="P:purine ribonucleoside salvage"/>
    <property type="evidence" value="ECO:0007669"/>
    <property type="project" value="UniProtKB-KW"/>
</dbReference>
<dbReference type="CDD" id="cd01320">
    <property type="entry name" value="ADA"/>
    <property type="match status" value="1"/>
</dbReference>
<dbReference type="FunFam" id="3.20.20.140:FF:000066">
    <property type="entry name" value="Adenosine deaminase"/>
    <property type="match status" value="1"/>
</dbReference>
<dbReference type="Gene3D" id="3.20.20.140">
    <property type="entry name" value="Metal-dependent hydrolases"/>
    <property type="match status" value="1"/>
</dbReference>
<dbReference type="InterPro" id="IPR006650">
    <property type="entry name" value="A/AMP_deam_AS"/>
</dbReference>
<dbReference type="InterPro" id="IPR001365">
    <property type="entry name" value="A_deaminase_dom"/>
</dbReference>
<dbReference type="InterPro" id="IPR006330">
    <property type="entry name" value="Ado/ade_deaminase"/>
</dbReference>
<dbReference type="InterPro" id="IPR032466">
    <property type="entry name" value="Metal_Hydrolase"/>
</dbReference>
<dbReference type="PANTHER" id="PTHR11409">
    <property type="entry name" value="ADENOSINE DEAMINASE"/>
    <property type="match status" value="1"/>
</dbReference>
<dbReference type="PANTHER" id="PTHR11409:SF43">
    <property type="entry name" value="ADENOSINE DEAMINASE"/>
    <property type="match status" value="1"/>
</dbReference>
<dbReference type="Pfam" id="PF00962">
    <property type="entry name" value="A_deaminase"/>
    <property type="match status" value="1"/>
</dbReference>
<dbReference type="SUPFAM" id="SSF51556">
    <property type="entry name" value="Metallo-dependent hydrolases"/>
    <property type="match status" value="1"/>
</dbReference>
<dbReference type="PROSITE" id="PS00485">
    <property type="entry name" value="A_DEAMINASE"/>
    <property type="match status" value="1"/>
</dbReference>
<evidence type="ECO:0000250" key="1">
    <source>
        <dbReference type="UniProtKB" id="A5KE01"/>
    </source>
</evidence>
<evidence type="ECO:0000269" key="2">
    <source>
    </source>
</evidence>
<evidence type="ECO:0000269" key="3">
    <source>
    </source>
</evidence>
<evidence type="ECO:0000305" key="4"/>
<evidence type="ECO:0000305" key="5">
    <source>
    </source>
</evidence>
<evidence type="ECO:0000305" key="6">
    <source>
    </source>
</evidence>
<evidence type="ECO:0000312" key="7">
    <source>
        <dbReference type="EMBL" id="CZT98552.1"/>
    </source>
</evidence>
<evidence type="ECO:0000312" key="8">
    <source>
        <dbReference type="Proteomes" id="UP000001450"/>
    </source>
</evidence>
<evidence type="ECO:0007744" key="9">
    <source>
        <dbReference type="PDB" id="6II7"/>
    </source>
</evidence>
<evidence type="ECO:0007829" key="10">
    <source>
        <dbReference type="PDB" id="6II7"/>
    </source>
</evidence>
<reference evidence="8" key="1">
    <citation type="journal article" date="2002" name="Nature">
        <title>Genome sequence of the human malaria parasite Plasmodium falciparum.</title>
        <authorList>
            <person name="Gardner M.J."/>
            <person name="Hall N."/>
            <person name="Fung E."/>
            <person name="White O."/>
            <person name="Berriman M."/>
            <person name="Hyman R.W."/>
            <person name="Carlton J.M."/>
            <person name="Pain A."/>
            <person name="Nelson K.E."/>
            <person name="Bowman S."/>
            <person name="Paulsen I.T."/>
            <person name="James K.D."/>
            <person name="Eisen J.A."/>
            <person name="Rutherford K.M."/>
            <person name="Salzberg S.L."/>
            <person name="Craig A."/>
            <person name="Kyes S."/>
            <person name="Chan M.-S."/>
            <person name="Nene V."/>
            <person name="Shallom S.J."/>
            <person name="Suh B."/>
            <person name="Peterson J."/>
            <person name="Angiuoli S."/>
            <person name="Pertea M."/>
            <person name="Allen J."/>
            <person name="Selengut J."/>
            <person name="Haft D."/>
            <person name="Mather M.W."/>
            <person name="Vaidya A.B."/>
            <person name="Martin D.M.A."/>
            <person name="Fairlamb A.H."/>
            <person name="Fraunholz M.J."/>
            <person name="Roos D.S."/>
            <person name="Ralph S.A."/>
            <person name="McFadden G.I."/>
            <person name="Cummings L.M."/>
            <person name="Subramanian G.M."/>
            <person name="Mungall C."/>
            <person name="Venter J.C."/>
            <person name="Carucci D.J."/>
            <person name="Hoffman S.L."/>
            <person name="Newbold C."/>
            <person name="Davis R.W."/>
            <person name="Fraser C.M."/>
            <person name="Barrell B.G."/>
        </authorList>
    </citation>
    <scope>NUCLEOTIDE SEQUENCE [LARGE SCALE GENOMIC DNA]</scope>
    <source>
        <strain evidence="8">3D7</strain>
    </source>
</reference>
<reference evidence="4" key="2">
    <citation type="journal article" date="2009" name="Biochemistry">
        <title>Structural and metabolic specificity of methylthiocoformycin for malarial adenosine deaminases.</title>
        <authorList>
            <person name="Ho M.C."/>
            <person name="Cassera M.B."/>
            <person name="Madrid D.C."/>
            <person name="Ting L.M."/>
            <person name="Tyler P.C."/>
            <person name="Kim K."/>
            <person name="Almo S.C."/>
            <person name="Schramm V.L."/>
        </authorList>
    </citation>
    <scope>FUNCTION</scope>
    <scope>CATALYTIC ACTIVITY</scope>
    <scope>ACTIVITY REGULATION</scope>
    <scope>BIOPHYSICOCHEMICAL PROPERTIES</scope>
</reference>
<reference evidence="9" key="3">
    <citation type="journal article" date="2019" name="Arch. Biochem. Biophys.">
        <title>Crystal structure of Plasmodium falciparum adenosine deaminase reveals a novel binding pocket for inosine.</title>
        <authorList>
            <person name="Jaruwat A."/>
            <person name="Riangrungroj P."/>
            <person name="Ubonprasert S."/>
            <person name="Sae-Ueng U."/>
            <person name="Kuaprasert B."/>
            <person name="Yuthavong Y."/>
            <person name="Leartsakulpanich U."/>
            <person name="Chitnumsub P."/>
        </authorList>
    </citation>
    <scope>X-RAY CRYSTALLOGRAPHY (2.48 ANGSTROMS) OF MUTANT GLN-27 AND ILE-227 IN COMPLEX WITH ZINC; INOSINE AND HYPOXANTHINE</scope>
    <scope>FUNCTION</scope>
    <scope>CATALYTIC ACTIVITY</scope>
    <scope>BIOPHYSICOCHEMICAL PROPERTIES</scope>
    <scope>PATHWAY</scope>
    <scope>MUTAGENESIS OF CYS-27; PHE-136; THR-174; ASP-176; LEU-179 AND LEU-227</scope>
</reference>
<keyword id="KW-0002">3D-structure</keyword>
<keyword id="KW-0378">Hydrolase</keyword>
<keyword id="KW-0479">Metal-binding</keyword>
<keyword id="KW-0660">Purine salvage</keyword>
<keyword id="KW-1185">Reference proteome</keyword>
<keyword id="KW-0862">Zinc</keyword>
<protein>
    <recommendedName>
        <fullName evidence="4">Adenosine deaminase</fullName>
        <ecNumber evidence="2 3">3.5.4.4</ecNumber>
    </recommendedName>
    <alternativeName>
        <fullName evidence="4">S-methyl-5'-thioadenosine deaminase</fullName>
        <ecNumber evidence="2 3">3.5.4.31</ecNumber>
    </alternativeName>
</protein>
<comment type="function">
    <text evidence="2 3 5">Catalyzes the hydrolytic deamination of adenosine to produce inosine (PubMed:19728741, PubMed:31002765). Unlike mammalian adenosine deaminases, also catalyzes the deamination of 5'-methylthioadenosine (MTA), a by-product of polyamine biosynthesis, to produce 5'-methylthioinosine (MTI) (PubMed:19728741, PubMed:31002765). Plays an essential role in the purine salvage pathway which allows the parasite to use host cell purines for the synthesis of nucleic acids (Probable).</text>
</comment>
<comment type="catalytic activity">
    <reaction evidence="2 3">
        <text>adenosine + H2O + H(+) = inosine + NH4(+)</text>
        <dbReference type="Rhea" id="RHEA:24408"/>
        <dbReference type="ChEBI" id="CHEBI:15377"/>
        <dbReference type="ChEBI" id="CHEBI:15378"/>
        <dbReference type="ChEBI" id="CHEBI:16335"/>
        <dbReference type="ChEBI" id="CHEBI:17596"/>
        <dbReference type="ChEBI" id="CHEBI:28938"/>
        <dbReference type="EC" id="3.5.4.4"/>
    </reaction>
</comment>
<comment type="catalytic activity">
    <reaction evidence="2 3">
        <text>S-methyl-5'-thioadenosine + H2O + H(+) = S-methyl-5'-thioinosine + NH4(+)</text>
        <dbReference type="Rhea" id="RHEA:25025"/>
        <dbReference type="ChEBI" id="CHEBI:15377"/>
        <dbReference type="ChEBI" id="CHEBI:15378"/>
        <dbReference type="ChEBI" id="CHEBI:17509"/>
        <dbReference type="ChEBI" id="CHEBI:28938"/>
        <dbReference type="ChEBI" id="CHEBI:48595"/>
        <dbReference type="EC" id="3.5.4.31"/>
    </reaction>
</comment>
<comment type="cofactor">
    <cofactor evidence="6">
        <name>Zn(2+)</name>
        <dbReference type="ChEBI" id="CHEBI:29105"/>
    </cofactor>
    <text evidence="3">Binds 1 zinc ion per subunit.</text>
</comment>
<comment type="activity regulation">
    <text evidence="2">Inhibited by coformycin and methylthiocoformycin (MT-coformycin).</text>
</comment>
<comment type="biophysicochemical properties">
    <kinetics>
        <KM evidence="3">17.84 uM for adenosine (at pH 8)</KM>
        <KM evidence="2">88 uM for adenosine (at pH 8)</KM>
        <KM evidence="3">30.6 uM for 5'-methylthioadenosine (MTA) (at pH 8)</KM>
        <KM evidence="2">115 uM for 5'-methylthioadenosine (MTA) (at pH 8)</KM>
        <text evidence="2 3">kcat is 4.1 sec(-1) with adenosine as substrate (PubMed:31002765). kcat is 5.6 sec(-1) with adenosine as substrate (PubMed:19728741). kcat is 13.92 sec(-1) with 5'-methylthioadenosine as substrate (PubMed:31002765). kcat is 5.8 sec(-1) with 5'-methylthioadenosine as substrate (PubMed:19728741).</text>
    </kinetics>
</comment>
<comment type="pathway">
    <text evidence="6">Purine metabolism; purine nucleoside salvage.</text>
</comment>
<comment type="similarity">
    <text evidence="4">Belongs to the metallo-dependent hydrolases superfamily. Adenosine and AMP deaminases family.</text>
</comment>